<accession>B6I491</accession>
<protein>
    <recommendedName>
        <fullName evidence="1">Threonine/serine transporter TdcC</fullName>
    </recommendedName>
    <alternativeName>
        <fullName evidence="1">H(+)/threonine-serine symporter</fullName>
    </alternativeName>
</protein>
<proteinExistence type="inferred from homology"/>
<feature type="chain" id="PRO_1000147631" description="Threonine/serine transporter TdcC">
    <location>
        <begin position="1"/>
        <end position="443"/>
    </location>
</feature>
<feature type="transmembrane region" description="Helical" evidence="1">
    <location>
        <begin position="22"/>
        <end position="42"/>
    </location>
</feature>
<feature type="transmembrane region" description="Helical" evidence="1">
    <location>
        <begin position="44"/>
        <end position="64"/>
    </location>
</feature>
<feature type="transmembrane region" description="Helical" evidence="1">
    <location>
        <begin position="97"/>
        <end position="117"/>
    </location>
</feature>
<feature type="transmembrane region" description="Helical" evidence="1">
    <location>
        <begin position="140"/>
        <end position="160"/>
    </location>
</feature>
<feature type="transmembrane region" description="Helical" evidence="1">
    <location>
        <begin position="163"/>
        <end position="183"/>
    </location>
</feature>
<feature type="transmembrane region" description="Helical" evidence="1">
    <location>
        <begin position="207"/>
        <end position="227"/>
    </location>
</feature>
<feature type="transmembrane region" description="Helical" evidence="1">
    <location>
        <begin position="261"/>
        <end position="281"/>
    </location>
</feature>
<feature type="transmembrane region" description="Helical" evidence="1">
    <location>
        <begin position="311"/>
        <end position="331"/>
    </location>
</feature>
<feature type="transmembrane region" description="Helical" evidence="1">
    <location>
        <begin position="366"/>
        <end position="386"/>
    </location>
</feature>
<feature type="transmembrane region" description="Helical" evidence="1">
    <location>
        <begin position="389"/>
        <end position="409"/>
    </location>
</feature>
<feature type="transmembrane region" description="Helical" evidence="1">
    <location>
        <begin position="423"/>
        <end position="443"/>
    </location>
</feature>
<sequence>MSTSDSIVSSQTKQSSWRKSDTTWTLGLFGTAIGAGVLFFPIRAGFGGLIPILLMLVLAYPIAFYCHRALARLCLSGSNPSGNITETVEEHFGKTGGVVITFLYFFAICPLLWIYGVTITNTFMTFWENQLGFAPLNRGFVALFLLLLMAFVIWFGKDLMVKVMSYLVWPFIASLVLISLSLIPYWNSAVIDQVDLGSLSLTGHDGILITVWLGISIMVFSFNFSPIVSSFVVSKREEYEKDFGRDFTERKCSQIISRASMLMVAVVMFFAFSCLFTLSPANMAEAKAQNIPVLSYLANHFASMTGTKTTFAITLEYAASIIALVAIFKSFFGHYLGTLEGLNGLILKFGYKGDKTKVSLGKLNTISMIFIMGSTWVVAYANPNILDLIEAMGAPIIASLLCLLPMYAIRKAPSLAKYRGRLDNVFVTVIGLLTILNIVYKLF</sequence>
<reference key="1">
    <citation type="journal article" date="2008" name="DNA Res.">
        <title>Complete genome sequence and comparative analysis of the wild-type commensal Escherichia coli strain SE11 isolated from a healthy adult.</title>
        <authorList>
            <person name="Oshima K."/>
            <person name="Toh H."/>
            <person name="Ogura Y."/>
            <person name="Sasamoto H."/>
            <person name="Morita H."/>
            <person name="Park S.-H."/>
            <person name="Ooka T."/>
            <person name="Iyoda S."/>
            <person name="Taylor T.D."/>
            <person name="Hayashi T."/>
            <person name="Itoh K."/>
            <person name="Hattori M."/>
        </authorList>
    </citation>
    <scope>NUCLEOTIDE SEQUENCE [LARGE SCALE GENOMIC DNA]</scope>
    <source>
        <strain>SE11</strain>
    </source>
</reference>
<gene>
    <name evidence="1" type="primary">tdcC</name>
    <name type="ordered locus">ECSE_3400</name>
</gene>
<keyword id="KW-0029">Amino-acid transport</keyword>
<keyword id="KW-0997">Cell inner membrane</keyword>
<keyword id="KW-1003">Cell membrane</keyword>
<keyword id="KW-0472">Membrane</keyword>
<keyword id="KW-0769">Symport</keyword>
<keyword id="KW-0812">Transmembrane</keyword>
<keyword id="KW-1133">Transmembrane helix</keyword>
<keyword id="KW-0813">Transport</keyword>
<comment type="function">
    <text evidence="1">Involved in the import of threonine and serine into the cell, with the concomitant import of a proton (symport system).</text>
</comment>
<comment type="catalytic activity">
    <reaction evidence="1">
        <text>L-threonine(in) + H(+)(in) = L-threonine(out) + H(+)(out)</text>
        <dbReference type="Rhea" id="RHEA:28883"/>
        <dbReference type="ChEBI" id="CHEBI:15378"/>
        <dbReference type="ChEBI" id="CHEBI:57926"/>
    </reaction>
    <physiologicalReaction direction="right-to-left" evidence="1">
        <dbReference type="Rhea" id="RHEA:28885"/>
    </physiologicalReaction>
</comment>
<comment type="catalytic activity">
    <reaction evidence="1">
        <text>L-serine(in) + H(+)(in) = L-serine(out) + H(+)(out)</text>
        <dbReference type="Rhea" id="RHEA:28887"/>
        <dbReference type="ChEBI" id="CHEBI:15378"/>
        <dbReference type="ChEBI" id="CHEBI:33384"/>
    </reaction>
    <physiologicalReaction direction="right-to-left" evidence="1">
        <dbReference type="Rhea" id="RHEA:28889"/>
    </physiologicalReaction>
</comment>
<comment type="subcellular location">
    <subcellularLocation>
        <location evidence="1">Cell inner membrane</location>
        <topology evidence="1">Multi-pass membrane protein</topology>
    </subcellularLocation>
</comment>
<comment type="similarity">
    <text evidence="1">Belongs to the amino acid/polyamine transporter 2 family. SdaC/TdcC subfamily.</text>
</comment>
<organism>
    <name type="scientific">Escherichia coli (strain SE11)</name>
    <dbReference type="NCBI Taxonomy" id="409438"/>
    <lineage>
        <taxon>Bacteria</taxon>
        <taxon>Pseudomonadati</taxon>
        <taxon>Pseudomonadota</taxon>
        <taxon>Gammaproteobacteria</taxon>
        <taxon>Enterobacterales</taxon>
        <taxon>Enterobacteriaceae</taxon>
        <taxon>Escherichia</taxon>
    </lineage>
</organism>
<evidence type="ECO:0000255" key="1">
    <source>
        <dbReference type="HAMAP-Rule" id="MF_01583"/>
    </source>
</evidence>
<name>TDCC_ECOSE</name>
<dbReference type="EMBL" id="AP009240">
    <property type="protein sequence ID" value="BAG78924.1"/>
    <property type="molecule type" value="Genomic_DNA"/>
</dbReference>
<dbReference type="RefSeq" id="WP_000107720.1">
    <property type="nucleotide sequence ID" value="NC_011415.1"/>
</dbReference>
<dbReference type="SMR" id="B6I491"/>
<dbReference type="GeneID" id="75205075"/>
<dbReference type="KEGG" id="ecy:ECSE_3400"/>
<dbReference type="HOGENOM" id="CLU_052043_1_1_6"/>
<dbReference type="Proteomes" id="UP000008199">
    <property type="component" value="Chromosome"/>
</dbReference>
<dbReference type="GO" id="GO:0005886">
    <property type="term" value="C:plasma membrane"/>
    <property type="evidence" value="ECO:0007669"/>
    <property type="project" value="UniProtKB-SubCell"/>
</dbReference>
<dbReference type="GO" id="GO:0015194">
    <property type="term" value="F:L-serine transmembrane transporter activity"/>
    <property type="evidence" value="ECO:0007669"/>
    <property type="project" value="InterPro"/>
</dbReference>
<dbReference type="GO" id="GO:0015293">
    <property type="term" value="F:symporter activity"/>
    <property type="evidence" value="ECO:0007669"/>
    <property type="project" value="UniProtKB-UniRule"/>
</dbReference>
<dbReference type="GO" id="GO:0015565">
    <property type="term" value="F:threonine efflux transmembrane transporter activity"/>
    <property type="evidence" value="ECO:0007669"/>
    <property type="project" value="InterPro"/>
</dbReference>
<dbReference type="HAMAP" id="MF_01583">
    <property type="entry name" value="Thr_Ser_transp_TdcC"/>
    <property type="match status" value="1"/>
</dbReference>
<dbReference type="InterPro" id="IPR018227">
    <property type="entry name" value="Amino_acid_transport_2"/>
</dbReference>
<dbReference type="InterPro" id="IPR004694">
    <property type="entry name" value="Hydroxy_aa_transpt"/>
</dbReference>
<dbReference type="InterPro" id="IPR023726">
    <property type="entry name" value="Thr/Ser_transpt_TdcC"/>
</dbReference>
<dbReference type="NCBIfam" id="NF010152">
    <property type="entry name" value="PRK13629.1"/>
    <property type="match status" value="1"/>
</dbReference>
<dbReference type="NCBIfam" id="TIGR00814">
    <property type="entry name" value="stp"/>
    <property type="match status" value="1"/>
</dbReference>
<dbReference type="PANTHER" id="PTHR35334">
    <property type="entry name" value="SERINE TRANSPORTER"/>
    <property type="match status" value="1"/>
</dbReference>
<dbReference type="PANTHER" id="PTHR35334:SF1">
    <property type="entry name" value="THREONINE_SERINE TRANSPORTER TDCC"/>
    <property type="match status" value="1"/>
</dbReference>
<dbReference type="Pfam" id="PF03222">
    <property type="entry name" value="Trp_Tyr_perm"/>
    <property type="match status" value="1"/>
</dbReference>